<sequence length="131" mass="15563">MNPAYRKAMLESEIQKLLMEALQQLRDPRLKKDFVTFSRVELSKDKRYADVYVSFLGTPEERKETVEILNRAKGFFRTFISKNLRLYVAPEIRFYEDKGIEASVKVHQLLVQLGYDPLKDKEKKEEDKEEE</sequence>
<organism>
    <name type="scientific">Thermotoga petrophila (strain ATCC BAA-488 / DSM 13995 / JCM 10881 / RKU-1)</name>
    <dbReference type="NCBI Taxonomy" id="390874"/>
    <lineage>
        <taxon>Bacteria</taxon>
        <taxon>Thermotogati</taxon>
        <taxon>Thermotogota</taxon>
        <taxon>Thermotogae</taxon>
        <taxon>Thermotogales</taxon>
        <taxon>Thermotogaceae</taxon>
        <taxon>Thermotoga</taxon>
    </lineage>
</organism>
<name>RBFA_THEP1</name>
<accession>A5IIS8</accession>
<reference key="1">
    <citation type="submission" date="2007-05" db="EMBL/GenBank/DDBJ databases">
        <title>Complete sequence of Thermotoga petrophila RKU-1.</title>
        <authorList>
            <consortium name="US DOE Joint Genome Institute"/>
            <person name="Copeland A."/>
            <person name="Lucas S."/>
            <person name="Lapidus A."/>
            <person name="Barry K."/>
            <person name="Glavina del Rio T."/>
            <person name="Dalin E."/>
            <person name="Tice H."/>
            <person name="Pitluck S."/>
            <person name="Sims D."/>
            <person name="Brettin T."/>
            <person name="Bruce D."/>
            <person name="Detter J.C."/>
            <person name="Han C."/>
            <person name="Tapia R."/>
            <person name="Schmutz J."/>
            <person name="Larimer F."/>
            <person name="Land M."/>
            <person name="Hauser L."/>
            <person name="Kyrpides N."/>
            <person name="Mikhailova N."/>
            <person name="Nelson K."/>
            <person name="Gogarten J.P."/>
            <person name="Noll K."/>
            <person name="Richardson P."/>
        </authorList>
    </citation>
    <scope>NUCLEOTIDE SEQUENCE [LARGE SCALE GENOMIC DNA]</scope>
    <source>
        <strain>ATCC BAA-488 / DSM 13995 / JCM 10881 / RKU-1</strain>
    </source>
</reference>
<proteinExistence type="inferred from homology"/>
<gene>
    <name evidence="1" type="primary">rbfA</name>
    <name type="ordered locus">Tpet_0072</name>
</gene>
<dbReference type="EMBL" id="CP000702">
    <property type="protein sequence ID" value="ABQ46101.1"/>
    <property type="molecule type" value="Genomic_DNA"/>
</dbReference>
<dbReference type="RefSeq" id="WP_011942775.1">
    <property type="nucleotide sequence ID" value="NC_009486.1"/>
</dbReference>
<dbReference type="BMRB" id="A5IIS8"/>
<dbReference type="SMR" id="A5IIS8"/>
<dbReference type="STRING" id="390874.Tpet_0072"/>
<dbReference type="KEGG" id="tpt:Tpet_0072"/>
<dbReference type="eggNOG" id="COG0858">
    <property type="taxonomic scope" value="Bacteria"/>
</dbReference>
<dbReference type="HOGENOM" id="CLU_089475_6_5_0"/>
<dbReference type="Proteomes" id="UP000006558">
    <property type="component" value="Chromosome"/>
</dbReference>
<dbReference type="GO" id="GO:0005829">
    <property type="term" value="C:cytosol"/>
    <property type="evidence" value="ECO:0007669"/>
    <property type="project" value="TreeGrafter"/>
</dbReference>
<dbReference type="GO" id="GO:0043024">
    <property type="term" value="F:ribosomal small subunit binding"/>
    <property type="evidence" value="ECO:0007669"/>
    <property type="project" value="TreeGrafter"/>
</dbReference>
<dbReference type="GO" id="GO:0030490">
    <property type="term" value="P:maturation of SSU-rRNA"/>
    <property type="evidence" value="ECO:0007669"/>
    <property type="project" value="UniProtKB-UniRule"/>
</dbReference>
<dbReference type="Gene3D" id="3.30.300.20">
    <property type="match status" value="1"/>
</dbReference>
<dbReference type="HAMAP" id="MF_00003">
    <property type="entry name" value="RbfA"/>
    <property type="match status" value="1"/>
</dbReference>
<dbReference type="InterPro" id="IPR015946">
    <property type="entry name" value="KH_dom-like_a/b"/>
</dbReference>
<dbReference type="InterPro" id="IPR000238">
    <property type="entry name" value="RbfA"/>
</dbReference>
<dbReference type="InterPro" id="IPR023799">
    <property type="entry name" value="RbfA_dom_sf"/>
</dbReference>
<dbReference type="InterPro" id="IPR020053">
    <property type="entry name" value="Ribosome-bd_factorA_CS"/>
</dbReference>
<dbReference type="NCBIfam" id="TIGR00082">
    <property type="entry name" value="rbfA"/>
    <property type="match status" value="1"/>
</dbReference>
<dbReference type="PANTHER" id="PTHR33515">
    <property type="entry name" value="RIBOSOME-BINDING FACTOR A, CHLOROPLASTIC-RELATED"/>
    <property type="match status" value="1"/>
</dbReference>
<dbReference type="PANTHER" id="PTHR33515:SF1">
    <property type="entry name" value="RIBOSOME-BINDING FACTOR A, CHLOROPLASTIC-RELATED"/>
    <property type="match status" value="1"/>
</dbReference>
<dbReference type="Pfam" id="PF02033">
    <property type="entry name" value="RBFA"/>
    <property type="match status" value="1"/>
</dbReference>
<dbReference type="SUPFAM" id="SSF89919">
    <property type="entry name" value="Ribosome-binding factor A, RbfA"/>
    <property type="match status" value="1"/>
</dbReference>
<dbReference type="PROSITE" id="PS01319">
    <property type="entry name" value="RBFA"/>
    <property type="match status" value="1"/>
</dbReference>
<feature type="chain" id="PRO_1000000241" description="Ribosome-binding factor A">
    <location>
        <begin position="1"/>
        <end position="131"/>
    </location>
</feature>
<protein>
    <recommendedName>
        <fullName evidence="1">Ribosome-binding factor A</fullName>
    </recommendedName>
</protein>
<keyword id="KW-0963">Cytoplasm</keyword>
<keyword id="KW-0690">Ribosome biogenesis</keyword>
<evidence type="ECO:0000255" key="1">
    <source>
        <dbReference type="HAMAP-Rule" id="MF_00003"/>
    </source>
</evidence>
<comment type="function">
    <text evidence="1">One of several proteins that assist in the late maturation steps of the functional core of the 30S ribosomal subunit. Associates with free 30S ribosomal subunits (but not with 30S subunits that are part of 70S ribosomes or polysomes). Required for efficient processing of 16S rRNA. May interact with the 5'-terminal helix region of 16S rRNA.</text>
</comment>
<comment type="subunit">
    <text evidence="1">Monomer. Binds 30S ribosomal subunits, but not 50S ribosomal subunits or 70S ribosomes.</text>
</comment>
<comment type="subcellular location">
    <subcellularLocation>
        <location evidence="1">Cytoplasm</location>
    </subcellularLocation>
</comment>
<comment type="similarity">
    <text evidence="1">Belongs to the RbfA family.</text>
</comment>